<comment type="function">
    <text evidence="1">Catalyzes the aminotransferase reaction from putrescine to 2-oxoglutarate, leading to glutamate and 4-aminobutanal, which spontaneously cyclizes to form 1-pyrroline. This is the first step in one of two pathways for putrescine degradation, where putrescine is converted into 4-aminobutanoate (gamma-aminobutyrate or GABA) via 4-aminobutanal. Also functions as a cadaverine transaminase in a a L-lysine degradation pathway to succinate that proceeds via cadaverine, glutarate and L-2-hydroxyglutarate.</text>
</comment>
<comment type="catalytic activity">
    <reaction evidence="1">
        <text>an alkane-alpha,omega-diamine + 2-oxoglutarate = an omega-aminoaldehyde + L-glutamate</text>
        <dbReference type="Rhea" id="RHEA:18217"/>
        <dbReference type="Rhea" id="RHEA-COMP:9766"/>
        <dbReference type="Rhea" id="RHEA-COMP:12750"/>
        <dbReference type="ChEBI" id="CHEBI:16810"/>
        <dbReference type="ChEBI" id="CHEBI:29985"/>
        <dbReference type="ChEBI" id="CHEBI:70977"/>
        <dbReference type="ChEBI" id="CHEBI:133427"/>
        <dbReference type="EC" id="2.6.1.29"/>
    </reaction>
    <physiologicalReaction direction="left-to-right" evidence="1">
        <dbReference type="Rhea" id="RHEA:18218"/>
    </physiologicalReaction>
</comment>
<comment type="catalytic activity">
    <reaction evidence="1">
        <text>putrescine + 2-oxoglutarate = 1-pyrroline + L-glutamate + H2O</text>
        <dbReference type="Rhea" id="RHEA:12268"/>
        <dbReference type="ChEBI" id="CHEBI:15377"/>
        <dbReference type="ChEBI" id="CHEBI:16810"/>
        <dbReference type="ChEBI" id="CHEBI:29985"/>
        <dbReference type="ChEBI" id="CHEBI:36781"/>
        <dbReference type="ChEBI" id="CHEBI:326268"/>
        <dbReference type="EC" id="2.6.1.82"/>
    </reaction>
    <physiologicalReaction direction="left-to-right" evidence="1">
        <dbReference type="Rhea" id="RHEA:12269"/>
    </physiologicalReaction>
</comment>
<comment type="catalytic activity">
    <reaction evidence="1">
        <text>cadaverine + 2-oxoglutarate = 5-aminopentanal + L-glutamate</text>
        <dbReference type="Rhea" id="RHEA:61624"/>
        <dbReference type="ChEBI" id="CHEBI:16810"/>
        <dbReference type="ChEBI" id="CHEBI:29985"/>
        <dbReference type="ChEBI" id="CHEBI:58384"/>
        <dbReference type="ChEBI" id="CHEBI:144896"/>
    </reaction>
    <physiologicalReaction direction="left-to-right" evidence="1">
        <dbReference type="Rhea" id="RHEA:61625"/>
    </physiologicalReaction>
</comment>
<comment type="cofactor">
    <cofactor evidence="1">
        <name>pyridoxal 5'-phosphate</name>
        <dbReference type="ChEBI" id="CHEBI:597326"/>
    </cofactor>
</comment>
<comment type="pathway">
    <text evidence="1">Amine and polyamine degradation; putrescine degradation; 4-aminobutanal from putrescine (transaminase route): step 1/1.</text>
</comment>
<comment type="similarity">
    <text evidence="1">Belongs to the class-III pyridoxal-phosphate-dependent aminotransferase family. Putrescine aminotransferase subfamily.</text>
</comment>
<comment type="sequence caution" evidence="2">
    <conflict type="erroneous initiation">
        <sequence resource="EMBL-CDS" id="AAN82273"/>
    </conflict>
</comment>
<dbReference type="EC" id="2.6.1.82" evidence="1"/>
<dbReference type="EC" id="2.6.1.29" evidence="1"/>
<dbReference type="EMBL" id="AE014075">
    <property type="protein sequence ID" value="AAN82273.1"/>
    <property type="status" value="ALT_INIT"/>
    <property type="molecule type" value="Genomic_DNA"/>
</dbReference>
<dbReference type="SMR" id="Q8FDF5"/>
<dbReference type="STRING" id="199310.c3828"/>
<dbReference type="KEGG" id="ecc:c3828"/>
<dbReference type="eggNOG" id="COG4992">
    <property type="taxonomic scope" value="Bacteria"/>
</dbReference>
<dbReference type="HOGENOM" id="CLU_016922_10_0_6"/>
<dbReference type="UniPathway" id="UPA00188">
    <property type="reaction ID" value="UER00290"/>
</dbReference>
<dbReference type="Proteomes" id="UP000001410">
    <property type="component" value="Chromosome"/>
</dbReference>
<dbReference type="GO" id="GO:0019161">
    <property type="term" value="F:diamine transaminase activity"/>
    <property type="evidence" value="ECO:0007669"/>
    <property type="project" value="UniProtKB-EC"/>
</dbReference>
<dbReference type="GO" id="GO:0042802">
    <property type="term" value="F:identical protein binding"/>
    <property type="evidence" value="ECO:0007669"/>
    <property type="project" value="TreeGrafter"/>
</dbReference>
<dbReference type="GO" id="GO:0033094">
    <property type="term" value="F:putrescine--2-oxoglutarate transaminase activity"/>
    <property type="evidence" value="ECO:0007669"/>
    <property type="project" value="UniProtKB-UniRule"/>
</dbReference>
<dbReference type="GO" id="GO:0030170">
    <property type="term" value="F:pyridoxal phosphate binding"/>
    <property type="evidence" value="ECO:0007669"/>
    <property type="project" value="UniProtKB-UniRule"/>
</dbReference>
<dbReference type="GO" id="GO:0019477">
    <property type="term" value="P:L-lysine catabolic process"/>
    <property type="evidence" value="ECO:0007669"/>
    <property type="project" value="UniProtKB-UniRule"/>
</dbReference>
<dbReference type="GO" id="GO:0009447">
    <property type="term" value="P:putrescine catabolic process"/>
    <property type="evidence" value="ECO:0007669"/>
    <property type="project" value="UniProtKB-UniRule"/>
</dbReference>
<dbReference type="CDD" id="cd00610">
    <property type="entry name" value="OAT_like"/>
    <property type="match status" value="1"/>
</dbReference>
<dbReference type="FunFam" id="3.40.640.10:FF:000004">
    <property type="entry name" value="Acetylornithine aminotransferase"/>
    <property type="match status" value="1"/>
</dbReference>
<dbReference type="Gene3D" id="3.90.1150.10">
    <property type="entry name" value="Aspartate Aminotransferase, domain 1"/>
    <property type="match status" value="1"/>
</dbReference>
<dbReference type="Gene3D" id="3.40.640.10">
    <property type="entry name" value="Type I PLP-dependent aspartate aminotransferase-like (Major domain)"/>
    <property type="match status" value="1"/>
</dbReference>
<dbReference type="HAMAP" id="MF_01276">
    <property type="entry name" value="Putres_aminotrans_3"/>
    <property type="match status" value="1"/>
</dbReference>
<dbReference type="InterPro" id="IPR005814">
    <property type="entry name" value="Aminotrans_3"/>
</dbReference>
<dbReference type="InterPro" id="IPR049704">
    <property type="entry name" value="Aminotrans_3_PPA_site"/>
</dbReference>
<dbReference type="InterPro" id="IPR050103">
    <property type="entry name" value="Class-III_PLP-dep_AT"/>
</dbReference>
<dbReference type="InterPro" id="IPR017747">
    <property type="entry name" value="Putrescine_aminotransferase"/>
</dbReference>
<dbReference type="InterPro" id="IPR015424">
    <property type="entry name" value="PyrdxlP-dep_Trfase"/>
</dbReference>
<dbReference type="InterPro" id="IPR015421">
    <property type="entry name" value="PyrdxlP-dep_Trfase_major"/>
</dbReference>
<dbReference type="InterPro" id="IPR015422">
    <property type="entry name" value="PyrdxlP-dep_Trfase_small"/>
</dbReference>
<dbReference type="NCBIfam" id="NF008570">
    <property type="entry name" value="PRK11522.1"/>
    <property type="match status" value="1"/>
</dbReference>
<dbReference type="NCBIfam" id="TIGR03372">
    <property type="entry name" value="putres_am_tran"/>
    <property type="match status" value="1"/>
</dbReference>
<dbReference type="PANTHER" id="PTHR11986">
    <property type="entry name" value="AMINOTRANSFERASE CLASS III"/>
    <property type="match status" value="1"/>
</dbReference>
<dbReference type="PANTHER" id="PTHR11986:SF112">
    <property type="entry name" value="PUTRESCINE AMINOTRANSFERASE"/>
    <property type="match status" value="1"/>
</dbReference>
<dbReference type="Pfam" id="PF00202">
    <property type="entry name" value="Aminotran_3"/>
    <property type="match status" value="1"/>
</dbReference>
<dbReference type="PIRSF" id="PIRSF000521">
    <property type="entry name" value="Transaminase_4ab_Lys_Orn"/>
    <property type="match status" value="1"/>
</dbReference>
<dbReference type="SUPFAM" id="SSF53383">
    <property type="entry name" value="PLP-dependent transferases"/>
    <property type="match status" value="1"/>
</dbReference>
<dbReference type="PROSITE" id="PS00600">
    <property type="entry name" value="AA_TRANSFER_CLASS_3"/>
    <property type="match status" value="1"/>
</dbReference>
<name>PAT_ECOL6</name>
<accession>Q8FDF5</accession>
<reference key="1">
    <citation type="journal article" date="2002" name="Proc. Natl. Acad. Sci. U.S.A.">
        <title>Extensive mosaic structure revealed by the complete genome sequence of uropathogenic Escherichia coli.</title>
        <authorList>
            <person name="Welch R.A."/>
            <person name="Burland V."/>
            <person name="Plunkett G. III"/>
            <person name="Redford P."/>
            <person name="Roesch P."/>
            <person name="Rasko D."/>
            <person name="Buckles E.L."/>
            <person name="Liou S.-R."/>
            <person name="Boutin A."/>
            <person name="Hackett J."/>
            <person name="Stroud D."/>
            <person name="Mayhew G.F."/>
            <person name="Rose D.J."/>
            <person name="Zhou S."/>
            <person name="Schwartz D.C."/>
            <person name="Perna N.T."/>
            <person name="Mobley H.L.T."/>
            <person name="Donnenberg M.S."/>
            <person name="Blattner F.R."/>
        </authorList>
    </citation>
    <scope>NUCLEOTIDE SEQUENCE [LARGE SCALE GENOMIC DNA]</scope>
    <source>
        <strain>CFT073 / ATCC 700928 / UPEC</strain>
    </source>
</reference>
<feature type="chain" id="PRO_0000269730" description="Putrescine aminotransferase">
    <location>
        <begin position="1"/>
        <end position="459"/>
    </location>
</feature>
<feature type="binding site" description="in other chain" evidence="1">
    <location>
        <begin position="150"/>
        <end position="151"/>
    </location>
    <ligand>
        <name>pyridoxal 5'-phosphate</name>
        <dbReference type="ChEBI" id="CHEBI:597326"/>
        <note>ligand shared between dimeric partners</note>
    </ligand>
</feature>
<feature type="binding site" description="in other chain" evidence="1">
    <location>
        <position position="274"/>
    </location>
    <ligand>
        <name>pyridoxal 5'-phosphate</name>
        <dbReference type="ChEBI" id="CHEBI:597326"/>
        <note>ligand shared between dimeric partners</note>
    </ligand>
</feature>
<feature type="binding site" evidence="1">
    <location>
        <position position="332"/>
    </location>
    <ligand>
        <name>pyridoxal 5'-phosphate</name>
        <dbReference type="ChEBI" id="CHEBI:597326"/>
        <note>ligand shared between dimeric partners</note>
    </ligand>
</feature>
<feature type="modified residue" description="N6-(pyridoxal phosphate)lysine" evidence="1">
    <location>
        <position position="300"/>
    </location>
</feature>
<organism>
    <name type="scientific">Escherichia coli O6:H1 (strain CFT073 / ATCC 700928 / UPEC)</name>
    <dbReference type="NCBI Taxonomy" id="199310"/>
    <lineage>
        <taxon>Bacteria</taxon>
        <taxon>Pseudomonadati</taxon>
        <taxon>Pseudomonadota</taxon>
        <taxon>Gammaproteobacteria</taxon>
        <taxon>Enterobacterales</taxon>
        <taxon>Enterobacteriaceae</taxon>
        <taxon>Escherichia</taxon>
    </lineage>
</organism>
<proteinExistence type="inferred from homology"/>
<gene>
    <name evidence="1" type="primary">patA</name>
    <name type="ordered locus">c3828</name>
</gene>
<evidence type="ECO:0000255" key="1">
    <source>
        <dbReference type="HAMAP-Rule" id="MF_01276"/>
    </source>
</evidence>
<evidence type="ECO:0000305" key="2"/>
<protein>
    <recommendedName>
        <fullName evidence="1">Putrescine aminotransferase</fullName>
        <shortName evidence="1">PAT</shortName>
        <shortName evidence="1">PATase</shortName>
        <ecNumber evidence="1">2.6.1.82</ecNumber>
    </recommendedName>
    <alternativeName>
        <fullName evidence="1">Cadaverine transaminase</fullName>
    </alternativeName>
    <alternativeName>
        <fullName evidence="1">Diamine transaminase</fullName>
        <ecNumber evidence="1">2.6.1.29</ecNumber>
    </alternativeName>
    <alternativeName>
        <fullName evidence="1">Putrescine transaminase</fullName>
    </alternativeName>
    <alternativeName>
        <fullName evidence="1">Putrescine--2-oxoglutaric acid transaminase</fullName>
    </alternativeName>
</protein>
<sequence>MNRLPSSASALACSAHALNLIEKRTLDHEEMKALNREVIEYFKEHVNPGFLEYRKSVTAGGDYGAVEWQAGGLNTLVDTQGQEFIDCLGGFGIFNVGHRNPVVVSAVQNQLAKQPLHSQELLDPLRAMLAKTLAALTPGKLKYSFFCNSGTESVEAALKLAKAYQSPRGKFTFIATSGAFHGKSLGALSATAKSTFRKPFMPLLPGFRHVPFGNIEAMLTALNECKKTGDDVAAVILEPIQGEGGVILPPPGYLTAVRKLCDEFGALMILDEVQTGMGRTGKMFACEHENVQPDILCLAKALGGGVMPIGATIATEEVFSVLFDNPFLHTTTFGGNPLACAAALATINVLLEQNLPAQAEQKGDMLLDGFRQLAREYPDLVQEARGKGMLMAIEFVDNEIGYNFASEMFRQRVLVAGTLNNAKTIRIEPPLTLTIEQCELVIKAARKALAAMRVSVEEA</sequence>
<keyword id="KW-0032">Aminotransferase</keyword>
<keyword id="KW-0663">Pyridoxal phosphate</keyword>
<keyword id="KW-1185">Reference proteome</keyword>
<keyword id="KW-0808">Transferase</keyword>